<dbReference type="EC" id="3.4.21.92" evidence="1"/>
<dbReference type="EMBL" id="CP000891">
    <property type="protein sequence ID" value="ABX48800.1"/>
    <property type="molecule type" value="Genomic_DNA"/>
</dbReference>
<dbReference type="RefSeq" id="WP_006081124.1">
    <property type="nucleotide sequence ID" value="NC_009997.1"/>
</dbReference>
<dbReference type="SMR" id="A9KWH7"/>
<dbReference type="MEROPS" id="S14.001"/>
<dbReference type="GeneID" id="11771862"/>
<dbReference type="KEGG" id="sbn:Sbal195_1627"/>
<dbReference type="HOGENOM" id="CLU_058707_3_2_6"/>
<dbReference type="Proteomes" id="UP000000770">
    <property type="component" value="Chromosome"/>
</dbReference>
<dbReference type="GO" id="GO:0005737">
    <property type="term" value="C:cytoplasm"/>
    <property type="evidence" value="ECO:0007669"/>
    <property type="project" value="UniProtKB-SubCell"/>
</dbReference>
<dbReference type="GO" id="GO:0009368">
    <property type="term" value="C:endopeptidase Clp complex"/>
    <property type="evidence" value="ECO:0007669"/>
    <property type="project" value="TreeGrafter"/>
</dbReference>
<dbReference type="GO" id="GO:0004176">
    <property type="term" value="F:ATP-dependent peptidase activity"/>
    <property type="evidence" value="ECO:0007669"/>
    <property type="project" value="InterPro"/>
</dbReference>
<dbReference type="GO" id="GO:0051117">
    <property type="term" value="F:ATPase binding"/>
    <property type="evidence" value="ECO:0007669"/>
    <property type="project" value="TreeGrafter"/>
</dbReference>
<dbReference type="GO" id="GO:0004252">
    <property type="term" value="F:serine-type endopeptidase activity"/>
    <property type="evidence" value="ECO:0007669"/>
    <property type="project" value="UniProtKB-UniRule"/>
</dbReference>
<dbReference type="GO" id="GO:0006515">
    <property type="term" value="P:protein quality control for misfolded or incompletely synthesized proteins"/>
    <property type="evidence" value="ECO:0007669"/>
    <property type="project" value="TreeGrafter"/>
</dbReference>
<dbReference type="CDD" id="cd07017">
    <property type="entry name" value="S14_ClpP_2"/>
    <property type="match status" value="1"/>
</dbReference>
<dbReference type="FunFam" id="3.90.226.10:FF:000001">
    <property type="entry name" value="ATP-dependent Clp protease proteolytic subunit"/>
    <property type="match status" value="1"/>
</dbReference>
<dbReference type="Gene3D" id="3.90.226.10">
    <property type="entry name" value="2-enoyl-CoA Hydratase, Chain A, domain 1"/>
    <property type="match status" value="1"/>
</dbReference>
<dbReference type="HAMAP" id="MF_00444">
    <property type="entry name" value="ClpP"/>
    <property type="match status" value="1"/>
</dbReference>
<dbReference type="InterPro" id="IPR001907">
    <property type="entry name" value="ClpP"/>
</dbReference>
<dbReference type="InterPro" id="IPR029045">
    <property type="entry name" value="ClpP/crotonase-like_dom_sf"/>
</dbReference>
<dbReference type="InterPro" id="IPR023562">
    <property type="entry name" value="ClpP/TepA"/>
</dbReference>
<dbReference type="InterPro" id="IPR033135">
    <property type="entry name" value="ClpP_His_AS"/>
</dbReference>
<dbReference type="InterPro" id="IPR018215">
    <property type="entry name" value="ClpP_Ser_AS"/>
</dbReference>
<dbReference type="NCBIfam" id="TIGR00493">
    <property type="entry name" value="clpP"/>
    <property type="match status" value="1"/>
</dbReference>
<dbReference type="NCBIfam" id="NF001368">
    <property type="entry name" value="PRK00277.1"/>
    <property type="match status" value="1"/>
</dbReference>
<dbReference type="NCBIfam" id="NF009205">
    <property type="entry name" value="PRK12553.1"/>
    <property type="match status" value="1"/>
</dbReference>
<dbReference type="PANTHER" id="PTHR10381">
    <property type="entry name" value="ATP-DEPENDENT CLP PROTEASE PROTEOLYTIC SUBUNIT"/>
    <property type="match status" value="1"/>
</dbReference>
<dbReference type="PANTHER" id="PTHR10381:SF70">
    <property type="entry name" value="ATP-DEPENDENT CLP PROTEASE PROTEOLYTIC SUBUNIT"/>
    <property type="match status" value="1"/>
</dbReference>
<dbReference type="Pfam" id="PF00574">
    <property type="entry name" value="CLP_protease"/>
    <property type="match status" value="1"/>
</dbReference>
<dbReference type="PRINTS" id="PR00127">
    <property type="entry name" value="CLPPROTEASEP"/>
</dbReference>
<dbReference type="SUPFAM" id="SSF52096">
    <property type="entry name" value="ClpP/crotonase"/>
    <property type="match status" value="1"/>
</dbReference>
<dbReference type="PROSITE" id="PS00382">
    <property type="entry name" value="CLP_PROTEASE_HIS"/>
    <property type="match status" value="1"/>
</dbReference>
<dbReference type="PROSITE" id="PS00381">
    <property type="entry name" value="CLP_PROTEASE_SER"/>
    <property type="match status" value="1"/>
</dbReference>
<evidence type="ECO:0000255" key="1">
    <source>
        <dbReference type="HAMAP-Rule" id="MF_00444"/>
    </source>
</evidence>
<reference key="1">
    <citation type="submission" date="2007-11" db="EMBL/GenBank/DDBJ databases">
        <title>Complete sequence of chromosome of Shewanella baltica OS195.</title>
        <authorList>
            <consortium name="US DOE Joint Genome Institute"/>
            <person name="Copeland A."/>
            <person name="Lucas S."/>
            <person name="Lapidus A."/>
            <person name="Barry K."/>
            <person name="Glavina del Rio T."/>
            <person name="Dalin E."/>
            <person name="Tice H."/>
            <person name="Pitluck S."/>
            <person name="Chain P."/>
            <person name="Malfatti S."/>
            <person name="Shin M."/>
            <person name="Vergez L."/>
            <person name="Schmutz J."/>
            <person name="Larimer F."/>
            <person name="Land M."/>
            <person name="Hauser L."/>
            <person name="Kyrpides N."/>
            <person name="Kim E."/>
            <person name="Brettar I."/>
            <person name="Rodrigues J."/>
            <person name="Konstantinidis K."/>
            <person name="Klappenbach J."/>
            <person name="Hofle M."/>
            <person name="Tiedje J."/>
            <person name="Richardson P."/>
        </authorList>
    </citation>
    <scope>NUCLEOTIDE SEQUENCE [LARGE SCALE GENOMIC DNA]</scope>
    <source>
        <strain>OS195</strain>
    </source>
</reference>
<comment type="function">
    <text evidence="1">Cleaves peptides in various proteins in a process that requires ATP hydrolysis. Has a chymotrypsin-like activity. Plays a major role in the degradation of misfolded proteins.</text>
</comment>
<comment type="catalytic activity">
    <reaction evidence="1">
        <text>Hydrolysis of proteins to small peptides in the presence of ATP and magnesium. alpha-casein is the usual test substrate. In the absence of ATP, only oligopeptides shorter than five residues are hydrolyzed (such as succinyl-Leu-Tyr-|-NHMec, and Leu-Tyr-Leu-|-Tyr-Trp, in which cleavage of the -Tyr-|-Leu- and -Tyr-|-Trp bonds also occurs).</text>
        <dbReference type="EC" id="3.4.21.92"/>
    </reaction>
</comment>
<comment type="subunit">
    <text evidence="1">Fourteen ClpP subunits assemble into 2 heptameric rings which stack back to back to give a disk-like structure with a central cavity, resembling the structure of eukaryotic proteasomes.</text>
</comment>
<comment type="subcellular location">
    <subcellularLocation>
        <location evidence="1">Cytoplasm</location>
    </subcellularLocation>
</comment>
<comment type="similarity">
    <text evidence="1">Belongs to the peptidase S14 family.</text>
</comment>
<proteinExistence type="inferred from homology"/>
<accession>A9KWH7</accession>
<name>CLPP_SHEB9</name>
<gene>
    <name evidence="1" type="primary">clpP</name>
    <name type="ordered locus">Sbal195_1627</name>
</gene>
<organism>
    <name type="scientific">Shewanella baltica (strain OS195)</name>
    <dbReference type="NCBI Taxonomy" id="399599"/>
    <lineage>
        <taxon>Bacteria</taxon>
        <taxon>Pseudomonadati</taxon>
        <taxon>Pseudomonadota</taxon>
        <taxon>Gammaproteobacteria</taxon>
        <taxon>Alteromonadales</taxon>
        <taxon>Shewanellaceae</taxon>
        <taxon>Shewanella</taxon>
    </lineage>
</organism>
<sequence>MHNASDIQSALVPMVIEQTAKGERSYDIYSRLLKERIIFLVGQVEEHMANLIVAQLLFLESESPDKDIFLYINSPGGSVTAGMAIYDTMQFIKPNVSTVCIGQAASMGAFLLAGGEKGKRHCLPNSRVMIHQPLGGFQGQASDIAIHAKEILGIKNKLNQMLAEHTGQPLEVVERDTDRDNFMSATQAVEYGLVDSVMTKRG</sequence>
<protein>
    <recommendedName>
        <fullName evidence="1">ATP-dependent Clp protease proteolytic subunit</fullName>
        <ecNumber evidence="1">3.4.21.92</ecNumber>
    </recommendedName>
    <alternativeName>
        <fullName evidence="1">Endopeptidase Clp</fullName>
    </alternativeName>
</protein>
<feature type="chain" id="PRO_1000080898" description="ATP-dependent Clp protease proteolytic subunit">
    <location>
        <begin position="1"/>
        <end position="202"/>
    </location>
</feature>
<feature type="active site" description="Nucleophile" evidence="1">
    <location>
        <position position="106"/>
    </location>
</feature>
<feature type="active site" evidence="1">
    <location>
        <position position="131"/>
    </location>
</feature>
<keyword id="KW-0963">Cytoplasm</keyword>
<keyword id="KW-0378">Hydrolase</keyword>
<keyword id="KW-0645">Protease</keyword>
<keyword id="KW-0720">Serine protease</keyword>